<geneLocation type="chloroplast"/>
<keyword id="KW-0066">ATP synthesis</keyword>
<keyword id="KW-0139">CF(1)</keyword>
<keyword id="KW-0150">Chloroplast</keyword>
<keyword id="KW-0375">Hydrogen ion transport</keyword>
<keyword id="KW-0406">Ion transport</keyword>
<keyword id="KW-0472">Membrane</keyword>
<keyword id="KW-0934">Plastid</keyword>
<keyword id="KW-0793">Thylakoid</keyword>
<keyword id="KW-0813">Transport</keyword>
<name>ATPD_TRICV</name>
<protein>
    <recommendedName>
        <fullName evidence="1">ATP synthase subunit delta, chloroplastic</fullName>
    </recommendedName>
    <alternativeName>
        <fullName evidence="1">ATP synthase F(1) sector subunit delta</fullName>
    </alternativeName>
    <alternativeName>
        <fullName evidence="1">F-type ATPase subunit delta</fullName>
    </alternativeName>
</protein>
<sequence length="187" mass="21130">MSINPLASKIAAPYARALFDFSVDQNLMHQITADFQNLEVFLNKTPDLTEYLSNPLISAKSKEEVLNKTLKSQINKETFKFLIVLVNRSRINLLEPIIASYLNLVYNAASVKMIEVSTAYAFTNLQKNTLIKKLKELTNAREIRLVITVDSSLIGGFLIKTNSKVLDFTIKNQLQKLAKHLDSVLEI</sequence>
<dbReference type="EMBL" id="X60752">
    <property type="protein sequence ID" value="CAA43156.1"/>
    <property type="molecule type" value="Genomic_DNA"/>
</dbReference>
<dbReference type="EMBL" id="X57701">
    <property type="protein sequence ID" value="CAA40878.1"/>
    <property type="molecule type" value="Genomic_DNA"/>
</dbReference>
<dbReference type="EMBL" id="Z67753">
    <property type="protein sequence ID" value="CAA91693.1"/>
    <property type="molecule type" value="Genomic_DNA"/>
</dbReference>
<dbReference type="PIR" id="S25395">
    <property type="entry name" value="S25395"/>
</dbReference>
<dbReference type="RefSeq" id="NP_043661.1">
    <property type="nucleotide sequence ID" value="NC_001713.1"/>
</dbReference>
<dbReference type="SMR" id="Q00821"/>
<dbReference type="GeneID" id="801756"/>
<dbReference type="GO" id="GO:0009535">
    <property type="term" value="C:chloroplast thylakoid membrane"/>
    <property type="evidence" value="ECO:0007669"/>
    <property type="project" value="UniProtKB-SubCell"/>
</dbReference>
<dbReference type="GO" id="GO:0045259">
    <property type="term" value="C:proton-transporting ATP synthase complex"/>
    <property type="evidence" value="ECO:0007669"/>
    <property type="project" value="UniProtKB-KW"/>
</dbReference>
<dbReference type="GO" id="GO:0046933">
    <property type="term" value="F:proton-transporting ATP synthase activity, rotational mechanism"/>
    <property type="evidence" value="ECO:0007669"/>
    <property type="project" value="UniProtKB-UniRule"/>
</dbReference>
<dbReference type="Gene3D" id="1.10.520.20">
    <property type="entry name" value="N-terminal domain of the delta subunit of the F1F0-ATP synthase"/>
    <property type="match status" value="1"/>
</dbReference>
<dbReference type="HAMAP" id="MF_01416">
    <property type="entry name" value="ATP_synth_delta_bact"/>
    <property type="match status" value="1"/>
</dbReference>
<dbReference type="InterPro" id="IPR026015">
    <property type="entry name" value="ATP_synth_OSCP/delta_N_sf"/>
</dbReference>
<dbReference type="InterPro" id="IPR020781">
    <property type="entry name" value="ATPase_OSCP/d_CS"/>
</dbReference>
<dbReference type="InterPro" id="IPR000711">
    <property type="entry name" value="ATPase_OSCP/dsu"/>
</dbReference>
<dbReference type="NCBIfam" id="TIGR01145">
    <property type="entry name" value="ATP_synt_delta"/>
    <property type="match status" value="1"/>
</dbReference>
<dbReference type="PANTHER" id="PTHR11910">
    <property type="entry name" value="ATP SYNTHASE DELTA CHAIN"/>
    <property type="match status" value="1"/>
</dbReference>
<dbReference type="Pfam" id="PF00213">
    <property type="entry name" value="OSCP"/>
    <property type="match status" value="1"/>
</dbReference>
<dbReference type="PRINTS" id="PR00125">
    <property type="entry name" value="ATPASEDELTA"/>
</dbReference>
<dbReference type="SUPFAM" id="SSF47928">
    <property type="entry name" value="N-terminal domain of the delta subunit of the F1F0-ATP synthase"/>
    <property type="match status" value="1"/>
</dbReference>
<dbReference type="PROSITE" id="PS00389">
    <property type="entry name" value="ATPASE_DELTA"/>
    <property type="match status" value="1"/>
</dbReference>
<proteinExistence type="inferred from homology"/>
<comment type="function">
    <text evidence="1">F(1)F(0) ATP synthase produces ATP from ADP in the presence of a proton or sodium gradient. F-type ATPases consist of two structural domains, F(1) containing the extramembraneous catalytic core and F(0) containing the membrane proton channel, linked together by a central stalk and a peripheral stalk. During catalysis, ATP synthesis in the catalytic domain of F(1) is coupled via a rotary mechanism of the central stalk subunits to proton translocation.</text>
</comment>
<comment type="function">
    <text evidence="1">This protein is part of the stalk that links CF(0) to CF(1). It either transmits conformational changes from CF(0) to CF(1) or is implicated in proton conduction.</text>
</comment>
<comment type="subunit">
    <text evidence="1">F-type ATPases have 2 components, F(1) - the catalytic core - and F(0) - the membrane proton channel. F(1) has five subunits: alpha(3), beta(3), gamma(1), delta(1), epsilon(1). CF(0) has four main subunits: a(1), b(1), b'(1) and c(10-14). The alpha and beta chains form an alternating ring which encloses part of the gamma chain. F(1) is attached to F(0) by a central stalk formed by the gamma and epsilon chains, while a peripheral stalk is formed by the delta, b and b' chains.</text>
</comment>
<comment type="subcellular location">
    <subcellularLocation>
        <location evidence="1">Plastid</location>
        <location evidence="1">Chloroplast thylakoid membrane</location>
        <topology evidence="1">Peripheral membrane protein</topology>
    </subcellularLocation>
</comment>
<comment type="similarity">
    <text evidence="1">Belongs to the ATPase delta chain family.</text>
</comment>
<organism>
    <name type="scientific">Trieres chinensis</name>
    <name type="common">Marine centric diatom</name>
    <name type="synonym">Odontella sinensis</name>
    <dbReference type="NCBI Taxonomy" id="1514140"/>
    <lineage>
        <taxon>Eukaryota</taxon>
        <taxon>Sar</taxon>
        <taxon>Stramenopiles</taxon>
        <taxon>Ochrophyta</taxon>
        <taxon>Bacillariophyta</taxon>
        <taxon>Mediophyceae</taxon>
        <taxon>Biddulphiophycidae</taxon>
        <taxon>Eupodiscales</taxon>
        <taxon>Parodontellaceae</taxon>
        <taxon>Trieres</taxon>
    </lineage>
</organism>
<evidence type="ECO:0000255" key="1">
    <source>
        <dbReference type="HAMAP-Rule" id="MF_01416"/>
    </source>
</evidence>
<reference key="1">
    <citation type="journal article" date="1992" name="J. Mol. Biol.">
        <title>Chloroplast ATPase genes in the diatom Odontella sinensis reflect cyanobacterial characters in structure and arrangement.</title>
        <authorList>
            <person name="Pancic P.G."/>
            <person name="Strotmann H."/>
            <person name="Kowallik K.V."/>
        </authorList>
    </citation>
    <scope>NUCLEOTIDE SEQUENCE [GENOMIC DNA]</scope>
</reference>
<reference key="2">
    <citation type="journal article" date="1991" name="FEBS Lett.">
        <title>The delta subunit of the chloroplast ATPase is plastid-encoded in the diatom Odontella sinensis.</title>
        <authorList>
            <person name="Pancic P.G."/>
            <person name="Strotmann H."/>
            <person name="Kowallik K.V."/>
        </authorList>
    </citation>
    <scope>NUCLEOTIDE SEQUENCE [GENOMIC DNA]</scope>
</reference>
<reference key="3">
    <citation type="journal article" date="1995" name="Plant Mol. Biol. Rep.">
        <title>The chloroplast genome of a chlorophyll a+c-containing alga, Odontella sinensis.</title>
        <authorList>
            <person name="Kowallik K.V."/>
            <person name="Stoebe B."/>
            <person name="Schaffran I."/>
            <person name="Kroth-Pancic P."/>
            <person name="Freier U."/>
        </authorList>
    </citation>
    <scope>NUCLEOTIDE SEQUENCE [LARGE SCALE GENOMIC DNA]</scope>
</reference>
<feature type="chain" id="PRO_0000193504" description="ATP synthase subunit delta, chloroplastic">
    <location>
        <begin position="1"/>
        <end position="187"/>
    </location>
</feature>
<accession>Q00821</accession>
<gene>
    <name evidence="1" type="primary">atpD</name>
</gene>